<name>YIDC_SALDC</name>
<reference key="1">
    <citation type="journal article" date="2011" name="J. Bacteriol.">
        <title>Comparative genomics of 28 Salmonella enterica isolates: evidence for CRISPR-mediated adaptive sublineage evolution.</title>
        <authorList>
            <person name="Fricke W.F."/>
            <person name="Mammel M.K."/>
            <person name="McDermott P.F."/>
            <person name="Tartera C."/>
            <person name="White D.G."/>
            <person name="Leclerc J.E."/>
            <person name="Ravel J."/>
            <person name="Cebula T.A."/>
        </authorList>
    </citation>
    <scope>NUCLEOTIDE SEQUENCE [LARGE SCALE GENOMIC DNA]</scope>
    <source>
        <strain>CT_02021853</strain>
    </source>
</reference>
<feature type="chain" id="PRO_1000187697" description="Membrane protein insertase YidC">
    <location>
        <begin position="1"/>
        <end position="548"/>
    </location>
</feature>
<feature type="transmembrane region" description="Helical" evidence="1">
    <location>
        <begin position="6"/>
        <end position="26"/>
    </location>
</feature>
<feature type="transmembrane region" description="Helical" evidence="1">
    <location>
        <begin position="350"/>
        <end position="370"/>
    </location>
</feature>
<feature type="transmembrane region" description="Helical" evidence="1">
    <location>
        <begin position="424"/>
        <end position="444"/>
    </location>
</feature>
<feature type="transmembrane region" description="Helical" evidence="1">
    <location>
        <begin position="458"/>
        <end position="478"/>
    </location>
</feature>
<feature type="transmembrane region" description="Helical" evidence="1">
    <location>
        <begin position="499"/>
        <end position="519"/>
    </location>
</feature>
<feature type="region of interest" description="Disordered" evidence="2">
    <location>
        <begin position="28"/>
        <end position="56"/>
    </location>
</feature>
<feature type="compositionally biased region" description="Low complexity" evidence="2">
    <location>
        <begin position="29"/>
        <end position="42"/>
    </location>
</feature>
<organism>
    <name type="scientific">Salmonella dublin (strain CT_02021853)</name>
    <dbReference type="NCBI Taxonomy" id="439851"/>
    <lineage>
        <taxon>Bacteria</taxon>
        <taxon>Pseudomonadati</taxon>
        <taxon>Pseudomonadota</taxon>
        <taxon>Gammaproteobacteria</taxon>
        <taxon>Enterobacterales</taxon>
        <taxon>Enterobacteriaceae</taxon>
        <taxon>Salmonella</taxon>
    </lineage>
</organism>
<accession>B5FN13</accession>
<comment type="function">
    <text evidence="1">Required for the insertion and/or proper folding and/or complex formation of integral membrane proteins into the membrane. Involved in integration of membrane proteins that insert both dependently and independently of the Sec translocase complex, as well as at least some lipoproteins. Aids folding of multispanning membrane proteins.</text>
</comment>
<comment type="subunit">
    <text evidence="1">Interacts with the Sec translocase complex via SecD. Specifically interacts with transmembrane segments of nascent integral membrane proteins during membrane integration.</text>
</comment>
<comment type="subcellular location">
    <subcellularLocation>
        <location evidence="1">Cell inner membrane</location>
        <topology evidence="1">Multi-pass membrane protein</topology>
    </subcellularLocation>
</comment>
<comment type="similarity">
    <text evidence="1">Belongs to the OXA1/ALB3/YidC family. Type 1 subfamily.</text>
</comment>
<gene>
    <name evidence="1" type="primary">yidC</name>
    <name type="ordered locus">SeD_A4233</name>
</gene>
<keyword id="KW-0997">Cell inner membrane</keyword>
<keyword id="KW-1003">Cell membrane</keyword>
<keyword id="KW-0143">Chaperone</keyword>
<keyword id="KW-0472">Membrane</keyword>
<keyword id="KW-0653">Protein transport</keyword>
<keyword id="KW-0812">Transmembrane</keyword>
<keyword id="KW-1133">Transmembrane helix</keyword>
<keyword id="KW-0813">Transport</keyword>
<evidence type="ECO:0000255" key="1">
    <source>
        <dbReference type="HAMAP-Rule" id="MF_01810"/>
    </source>
</evidence>
<evidence type="ECO:0000256" key="2">
    <source>
        <dbReference type="SAM" id="MobiDB-lite"/>
    </source>
</evidence>
<dbReference type="EMBL" id="CP001144">
    <property type="protein sequence ID" value="ACH75130.1"/>
    <property type="molecule type" value="Genomic_DNA"/>
</dbReference>
<dbReference type="RefSeq" id="WP_000378284.1">
    <property type="nucleotide sequence ID" value="NC_011205.1"/>
</dbReference>
<dbReference type="SMR" id="B5FN13"/>
<dbReference type="KEGG" id="sed:SeD_A4233"/>
<dbReference type="HOGENOM" id="CLU_016535_3_0_6"/>
<dbReference type="Proteomes" id="UP000008322">
    <property type="component" value="Chromosome"/>
</dbReference>
<dbReference type="GO" id="GO:0005886">
    <property type="term" value="C:plasma membrane"/>
    <property type="evidence" value="ECO:0007669"/>
    <property type="project" value="UniProtKB-SubCell"/>
</dbReference>
<dbReference type="GO" id="GO:0032977">
    <property type="term" value="F:membrane insertase activity"/>
    <property type="evidence" value="ECO:0007669"/>
    <property type="project" value="InterPro"/>
</dbReference>
<dbReference type="GO" id="GO:0051205">
    <property type="term" value="P:protein insertion into membrane"/>
    <property type="evidence" value="ECO:0007669"/>
    <property type="project" value="TreeGrafter"/>
</dbReference>
<dbReference type="GO" id="GO:0015031">
    <property type="term" value="P:protein transport"/>
    <property type="evidence" value="ECO:0007669"/>
    <property type="project" value="UniProtKB-KW"/>
</dbReference>
<dbReference type="CDD" id="cd20070">
    <property type="entry name" value="5TM_YidC_Alb3"/>
    <property type="match status" value="1"/>
</dbReference>
<dbReference type="CDD" id="cd19961">
    <property type="entry name" value="EcYidC-like_peri"/>
    <property type="match status" value="1"/>
</dbReference>
<dbReference type="FunFam" id="2.70.98.90:FF:000001">
    <property type="entry name" value="Membrane protein insertase YidC"/>
    <property type="match status" value="1"/>
</dbReference>
<dbReference type="Gene3D" id="2.70.98.90">
    <property type="match status" value="1"/>
</dbReference>
<dbReference type="HAMAP" id="MF_01810">
    <property type="entry name" value="YidC_type1"/>
    <property type="match status" value="1"/>
</dbReference>
<dbReference type="InterPro" id="IPR019998">
    <property type="entry name" value="Membr_insert_YidC"/>
</dbReference>
<dbReference type="InterPro" id="IPR028053">
    <property type="entry name" value="Membr_insert_YidC_N"/>
</dbReference>
<dbReference type="InterPro" id="IPR001708">
    <property type="entry name" value="YidC/ALB3/OXA1/COX18"/>
</dbReference>
<dbReference type="InterPro" id="IPR028055">
    <property type="entry name" value="YidC/Oxa/ALB_C"/>
</dbReference>
<dbReference type="InterPro" id="IPR047196">
    <property type="entry name" value="YidC_ALB_C"/>
</dbReference>
<dbReference type="InterPro" id="IPR038221">
    <property type="entry name" value="YidC_periplasmic_sf"/>
</dbReference>
<dbReference type="NCBIfam" id="NF002351">
    <property type="entry name" value="PRK01318.1-1"/>
    <property type="match status" value="1"/>
</dbReference>
<dbReference type="NCBIfam" id="NF002352">
    <property type="entry name" value="PRK01318.1-3"/>
    <property type="match status" value="1"/>
</dbReference>
<dbReference type="NCBIfam" id="TIGR03593">
    <property type="entry name" value="yidC_nterm"/>
    <property type="match status" value="1"/>
</dbReference>
<dbReference type="NCBIfam" id="TIGR03592">
    <property type="entry name" value="yidC_oxa1_cterm"/>
    <property type="match status" value="1"/>
</dbReference>
<dbReference type="PANTHER" id="PTHR12428:SF65">
    <property type="entry name" value="CYTOCHROME C OXIDASE ASSEMBLY PROTEIN COX18, MITOCHONDRIAL"/>
    <property type="match status" value="1"/>
</dbReference>
<dbReference type="PANTHER" id="PTHR12428">
    <property type="entry name" value="OXA1"/>
    <property type="match status" value="1"/>
</dbReference>
<dbReference type="Pfam" id="PF02096">
    <property type="entry name" value="60KD_IMP"/>
    <property type="match status" value="1"/>
</dbReference>
<dbReference type="Pfam" id="PF14849">
    <property type="entry name" value="YidC_periplas"/>
    <property type="match status" value="1"/>
</dbReference>
<dbReference type="PRINTS" id="PR00701">
    <property type="entry name" value="60KDINNERMP"/>
</dbReference>
<dbReference type="PRINTS" id="PR01900">
    <property type="entry name" value="YIDCPROTEIN"/>
</dbReference>
<sequence>MDSQRNLLVIALLFVSFMIWQAWEQDKNPQPQTQQTTQTTTTAAGSAADQGVPASGQGKMITVKTDVLDLTINTRGGDVEQALLPAYPKELGSNEPFQLLETTPQFIYQAQSGLTGRDGPDNPANGPRPLYNVEKEAFVLADGQNELQVPMTYTDAAGNTFTKTFVFKRGDYAVNVNYSVQNTGEKPLEVSTFGQLKQSVNLPPHRDTGSSNFALHTFRGAAYSTPDEKYEKYKFDTIADNENLNVSSKGGWVAMLQQYFATAWIPRNDGTNNFYTANLGNGIVAIGYKAQPVLVQPGQTGAMTSTLWVGPEIQDKMAAVAPHLDLTVDYGWLWFISQPLFKLLKWIHSFVGNWGFSIIIITFIVRGIMYPLTKAQYTSMAKMRMLQPKIQAMRERLGDDKQRQSQEMMALYKAEKVNPLGGCFPLIIQMPIFLALYYMLMGSIELRHAPFALWIHDLSAQDPYYILPILMGVTMFFIQKMSPTTVTDPMQQKIMTFMPVIFTVFFLWFPSGLVLYYIVSNLVTIIQQQLIYRGLEKRGLHSSEKKKS</sequence>
<protein>
    <recommendedName>
        <fullName evidence="1">Membrane protein insertase YidC</fullName>
    </recommendedName>
    <alternativeName>
        <fullName evidence="1">Foldase YidC</fullName>
    </alternativeName>
    <alternativeName>
        <fullName evidence="1">Membrane integrase YidC</fullName>
    </alternativeName>
    <alternativeName>
        <fullName evidence="1">Membrane protein YidC</fullName>
    </alternativeName>
</protein>
<proteinExistence type="inferred from homology"/>